<proteinExistence type="inferred from homology"/>
<organism>
    <name type="scientific">Acinetobacter baumannii (strain AB307-0294)</name>
    <dbReference type="NCBI Taxonomy" id="557600"/>
    <lineage>
        <taxon>Bacteria</taxon>
        <taxon>Pseudomonadati</taxon>
        <taxon>Pseudomonadota</taxon>
        <taxon>Gammaproteobacteria</taxon>
        <taxon>Moraxellales</taxon>
        <taxon>Moraxellaceae</taxon>
        <taxon>Acinetobacter</taxon>
        <taxon>Acinetobacter calcoaceticus/baumannii complex</taxon>
    </lineage>
</organism>
<dbReference type="EMBL" id="CP001172">
    <property type="protein sequence ID" value="ACJ57393.1"/>
    <property type="molecule type" value="Genomic_DNA"/>
</dbReference>
<dbReference type="RefSeq" id="WP_001284971.1">
    <property type="nucleotide sequence ID" value="NZ_CP001172.1"/>
</dbReference>
<dbReference type="SMR" id="B7H295"/>
<dbReference type="GeneID" id="92892166"/>
<dbReference type="HOGENOM" id="CLU_050669_0_1_6"/>
<dbReference type="Proteomes" id="UP000006924">
    <property type="component" value="Chromosome"/>
</dbReference>
<dbReference type="GO" id="GO:0005886">
    <property type="term" value="C:plasma membrane"/>
    <property type="evidence" value="ECO:0007669"/>
    <property type="project" value="UniProtKB-SubCell"/>
</dbReference>
<dbReference type="GO" id="GO:0045259">
    <property type="term" value="C:proton-transporting ATP synthase complex"/>
    <property type="evidence" value="ECO:0007669"/>
    <property type="project" value="UniProtKB-KW"/>
</dbReference>
<dbReference type="GO" id="GO:0005524">
    <property type="term" value="F:ATP binding"/>
    <property type="evidence" value="ECO:0007669"/>
    <property type="project" value="UniProtKB-UniRule"/>
</dbReference>
<dbReference type="GO" id="GO:0046933">
    <property type="term" value="F:proton-transporting ATP synthase activity, rotational mechanism"/>
    <property type="evidence" value="ECO:0007669"/>
    <property type="project" value="UniProtKB-UniRule"/>
</dbReference>
<dbReference type="GO" id="GO:0042777">
    <property type="term" value="P:proton motive force-driven plasma membrane ATP synthesis"/>
    <property type="evidence" value="ECO:0007669"/>
    <property type="project" value="UniProtKB-UniRule"/>
</dbReference>
<dbReference type="CDD" id="cd12151">
    <property type="entry name" value="F1-ATPase_gamma"/>
    <property type="match status" value="1"/>
</dbReference>
<dbReference type="FunFam" id="1.10.287.80:FF:000005">
    <property type="entry name" value="ATP synthase gamma chain"/>
    <property type="match status" value="1"/>
</dbReference>
<dbReference type="Gene3D" id="3.40.1380.10">
    <property type="match status" value="1"/>
</dbReference>
<dbReference type="Gene3D" id="1.10.287.80">
    <property type="entry name" value="ATP synthase, gamma subunit, helix hairpin domain"/>
    <property type="match status" value="1"/>
</dbReference>
<dbReference type="HAMAP" id="MF_00815">
    <property type="entry name" value="ATP_synth_gamma_bact"/>
    <property type="match status" value="1"/>
</dbReference>
<dbReference type="InterPro" id="IPR035968">
    <property type="entry name" value="ATP_synth_F1_ATPase_gsu"/>
</dbReference>
<dbReference type="InterPro" id="IPR000131">
    <property type="entry name" value="ATP_synth_F1_gsu"/>
</dbReference>
<dbReference type="InterPro" id="IPR023632">
    <property type="entry name" value="ATP_synth_F1_gsu_CS"/>
</dbReference>
<dbReference type="NCBIfam" id="TIGR01146">
    <property type="entry name" value="ATPsyn_F1gamma"/>
    <property type="match status" value="1"/>
</dbReference>
<dbReference type="NCBIfam" id="NF004144">
    <property type="entry name" value="PRK05621.1-1"/>
    <property type="match status" value="1"/>
</dbReference>
<dbReference type="PANTHER" id="PTHR11693">
    <property type="entry name" value="ATP SYNTHASE GAMMA CHAIN"/>
    <property type="match status" value="1"/>
</dbReference>
<dbReference type="PANTHER" id="PTHR11693:SF22">
    <property type="entry name" value="ATP SYNTHASE SUBUNIT GAMMA, MITOCHONDRIAL"/>
    <property type="match status" value="1"/>
</dbReference>
<dbReference type="Pfam" id="PF00231">
    <property type="entry name" value="ATP-synt"/>
    <property type="match status" value="1"/>
</dbReference>
<dbReference type="PRINTS" id="PR00126">
    <property type="entry name" value="ATPASEGAMMA"/>
</dbReference>
<dbReference type="SUPFAM" id="SSF52943">
    <property type="entry name" value="ATP synthase (F1-ATPase), gamma subunit"/>
    <property type="match status" value="1"/>
</dbReference>
<dbReference type="PROSITE" id="PS00153">
    <property type="entry name" value="ATPASE_GAMMA"/>
    <property type="match status" value="1"/>
</dbReference>
<gene>
    <name evidence="1" type="primary">atpG</name>
    <name type="ordered locus">ABBFA_003366</name>
</gene>
<sequence length="289" mass="32096">MANLKEIRAKVASIKSTQKITRAMQMVAASKMRRAQERMAQGRPYADNMRRVIAHLVQANPEYKHRYMVDRPVKRVGYIIVSSDRGLAGGLNINLFKKVVQHVKAQQEQSIEVQFALIGQKAVSFFKNYGGKVLGATTQIGDAPSLEQLTGSVQVMLDAFDKGELDRIYLVSNGFVNAMTQKPKVEQLVPLAPAEEGDDLNRTYGWDYIYEPEAEELLNGLLVRYIESMVYQGVIENVACEQSARMVAMKAATDNAGQLIKDLQLIYNKLRQAAITQEISEIVGGAAAV</sequence>
<name>ATPG_ACIB3</name>
<reference key="1">
    <citation type="journal article" date="2008" name="J. Bacteriol.">
        <title>Comparative genome sequence analysis of multidrug-resistant Acinetobacter baumannii.</title>
        <authorList>
            <person name="Adams M.D."/>
            <person name="Goglin K."/>
            <person name="Molyneaux N."/>
            <person name="Hujer K.M."/>
            <person name="Lavender H."/>
            <person name="Jamison J.J."/>
            <person name="MacDonald I.J."/>
            <person name="Martin K.M."/>
            <person name="Russo T."/>
            <person name="Campagnari A.A."/>
            <person name="Hujer A.M."/>
            <person name="Bonomo R.A."/>
            <person name="Gill S.R."/>
        </authorList>
    </citation>
    <scope>NUCLEOTIDE SEQUENCE [LARGE SCALE GENOMIC DNA]</scope>
    <source>
        <strain>AB307-0294</strain>
    </source>
</reference>
<feature type="chain" id="PRO_1000134093" description="ATP synthase gamma chain">
    <location>
        <begin position="1"/>
        <end position="289"/>
    </location>
</feature>
<evidence type="ECO:0000255" key="1">
    <source>
        <dbReference type="HAMAP-Rule" id="MF_00815"/>
    </source>
</evidence>
<accession>B7H295</accession>
<comment type="function">
    <text evidence="1">Produces ATP from ADP in the presence of a proton gradient across the membrane. The gamma chain is believed to be important in regulating ATPase activity and the flow of protons through the CF(0) complex.</text>
</comment>
<comment type="subunit">
    <text evidence="1">F-type ATPases have 2 components, CF(1) - the catalytic core - and CF(0) - the membrane proton channel. CF(1) has five subunits: alpha(3), beta(3), gamma(1), delta(1), epsilon(1). CF(0) has three main subunits: a, b and c.</text>
</comment>
<comment type="subcellular location">
    <subcellularLocation>
        <location evidence="1">Cell inner membrane</location>
        <topology evidence="1">Peripheral membrane protein</topology>
    </subcellularLocation>
</comment>
<comment type="similarity">
    <text evidence="1">Belongs to the ATPase gamma chain family.</text>
</comment>
<protein>
    <recommendedName>
        <fullName evidence="1">ATP synthase gamma chain</fullName>
    </recommendedName>
    <alternativeName>
        <fullName evidence="1">ATP synthase F1 sector gamma subunit</fullName>
    </alternativeName>
    <alternativeName>
        <fullName evidence="1">F-ATPase gamma subunit</fullName>
    </alternativeName>
</protein>
<keyword id="KW-0066">ATP synthesis</keyword>
<keyword id="KW-0997">Cell inner membrane</keyword>
<keyword id="KW-1003">Cell membrane</keyword>
<keyword id="KW-0139">CF(1)</keyword>
<keyword id="KW-0375">Hydrogen ion transport</keyword>
<keyword id="KW-0406">Ion transport</keyword>
<keyword id="KW-0472">Membrane</keyword>
<keyword id="KW-0813">Transport</keyword>